<reference key="1">
    <citation type="journal article" date="1986" name="Curr. Genet.">
        <title>Location and nucleotide sequence of the pre-apocytochrome f gene on the Oenothera hookeri plastid chromosome (Euoenothera plastome I).</title>
        <authorList>
            <person name="Tyagi A.K."/>
            <person name="Herrmann R.G."/>
        </authorList>
    </citation>
    <scope>NUCLEOTIDE SEQUENCE [GENOMIC DNA]</scope>
</reference>
<reference key="2">
    <citation type="journal article" date="2000" name="Mol. Gen. Genet.">
        <title>Complete nucleotide sequence of the Oenothera elata plastid chromosome, representing plastome I of the five distinguishable Euoenothera plastomes.</title>
        <authorList>
            <person name="Hupfer H."/>
            <person name="Swiatek M."/>
            <person name="Hornung S."/>
            <person name="Herrmann R.G."/>
            <person name="Maier R.M."/>
            <person name="Chiu W.-L."/>
            <person name="Sears B."/>
        </authorList>
    </citation>
    <scope>NUCLEOTIDE SEQUENCE [LARGE SCALE GENOMIC DNA]</scope>
    <source>
        <strain>cv. Johansen</strain>
    </source>
</reference>
<reference key="3">
    <citation type="journal article" date="1990" name="Curr. Genet.">
        <title>Structure and expression of cytochrome f in an Oenothera plastome mutant.</title>
        <authorList>
            <person name="Johnson E.M."/>
            <person name="Sears B.B."/>
        </authorList>
    </citation>
    <scope>NUCLEOTIDE SEQUENCE [GENOMIC DNA] OF 1-83</scope>
    <scope>MUTANT PM7</scope>
    <source>
        <strain>cv. Johansen</strain>
    </source>
</reference>
<geneLocation type="chloroplast"/>
<gene>
    <name type="primary">petA</name>
</gene>
<proteinExistence type="evidence at protein level"/>
<feature type="signal peptide" evidence="1">
    <location>
        <begin position="1"/>
        <end position="33"/>
    </location>
</feature>
<feature type="chain" id="PRO_0000023824" description="Cytochrome f">
    <location>
        <begin position="34"/>
        <end position="318"/>
    </location>
</feature>
<feature type="transmembrane region" description="Helical" evidence="2">
    <location>
        <begin position="284"/>
        <end position="303"/>
    </location>
</feature>
<feature type="binding site" description="axial binding residue" evidence="1">
    <location>
        <position position="34"/>
    </location>
    <ligand>
        <name>heme</name>
        <dbReference type="ChEBI" id="CHEBI:30413"/>
    </ligand>
    <ligandPart>
        <name>Fe</name>
        <dbReference type="ChEBI" id="CHEBI:18248"/>
    </ligandPart>
</feature>
<feature type="binding site" description="covalent" evidence="1">
    <location>
        <position position="54"/>
    </location>
    <ligand>
        <name>heme</name>
        <dbReference type="ChEBI" id="CHEBI:30413"/>
    </ligand>
</feature>
<feature type="binding site" description="covalent" evidence="1">
    <location>
        <position position="57"/>
    </location>
    <ligand>
        <name>heme</name>
        <dbReference type="ChEBI" id="CHEBI:30413"/>
    </ligand>
</feature>
<feature type="binding site" description="axial binding residue" evidence="1">
    <location>
        <position position="58"/>
    </location>
    <ligand>
        <name>heme</name>
        <dbReference type="ChEBI" id="CHEBI:30413"/>
    </ligand>
    <ligandPart>
        <name>Fe</name>
        <dbReference type="ChEBI" id="CHEBI:18248"/>
    </ligandPart>
</feature>
<feature type="mutagenesis site" description="In PM7.">
    <original>N</original>
    <variation>NRN</variation>
    <location>
        <position position="3"/>
    </location>
</feature>
<feature type="sequence conflict" description="In Ref. 1; CAA27251." evidence="3" ref="1">
    <original>I</original>
    <variation>T</variation>
    <location>
        <position position="254"/>
    </location>
</feature>
<feature type="sequence conflict" description="In Ref. 1; CAA27251." evidence="3" ref="1">
    <original>A</original>
    <variation>Q</variation>
    <location>
        <position position="292"/>
    </location>
</feature>
<protein>
    <recommendedName>
        <fullName>Cytochrome f</fullName>
    </recommendedName>
</protein>
<organism>
    <name type="scientific">Oenothera elata subsp. hookeri</name>
    <name type="common">Hooker's evening primrose</name>
    <name type="synonym">Oenothera hookeri</name>
    <dbReference type="NCBI Taxonomy" id="85636"/>
    <lineage>
        <taxon>Eukaryota</taxon>
        <taxon>Viridiplantae</taxon>
        <taxon>Streptophyta</taxon>
        <taxon>Embryophyta</taxon>
        <taxon>Tracheophyta</taxon>
        <taxon>Spermatophyta</taxon>
        <taxon>Magnoliopsida</taxon>
        <taxon>eudicotyledons</taxon>
        <taxon>Gunneridae</taxon>
        <taxon>Pentapetalae</taxon>
        <taxon>rosids</taxon>
        <taxon>malvids</taxon>
        <taxon>Myrtales</taxon>
        <taxon>Onagraceae</taxon>
        <taxon>Onagroideae</taxon>
        <taxon>Onagreae</taxon>
        <taxon>Oenothera</taxon>
    </lineage>
</organism>
<keyword id="KW-0150">Chloroplast</keyword>
<keyword id="KW-0249">Electron transport</keyword>
<keyword id="KW-0349">Heme</keyword>
<keyword id="KW-0408">Iron</keyword>
<keyword id="KW-0472">Membrane</keyword>
<keyword id="KW-0479">Metal-binding</keyword>
<keyword id="KW-0602">Photosynthesis</keyword>
<keyword id="KW-0934">Plastid</keyword>
<keyword id="KW-0732">Signal</keyword>
<keyword id="KW-0793">Thylakoid</keyword>
<keyword id="KW-0812">Transmembrane</keyword>
<keyword id="KW-1133">Transmembrane helix</keyword>
<keyword id="KW-0813">Transport</keyword>
<dbReference type="EMBL" id="X03570">
    <property type="protein sequence ID" value="CAA27251.1"/>
    <property type="molecule type" value="Genomic_DNA"/>
</dbReference>
<dbReference type="EMBL" id="AJ271079">
    <property type="protein sequence ID" value="CAB67170.1"/>
    <property type="molecule type" value="Genomic_DNA"/>
</dbReference>
<dbReference type="EMBL" id="X55574">
    <property type="protein sequence ID" value="CAA39160.1"/>
    <property type="molecule type" value="Genomic_DNA"/>
</dbReference>
<dbReference type="PIR" id="S00431">
    <property type="entry name" value="S00431"/>
</dbReference>
<dbReference type="RefSeq" id="NP_084705.1">
    <property type="nucleotide sequence ID" value="NC_002693.2"/>
</dbReference>
<dbReference type="SMR" id="P04658"/>
<dbReference type="GeneID" id="802732"/>
<dbReference type="GO" id="GO:0009535">
    <property type="term" value="C:chloroplast thylakoid membrane"/>
    <property type="evidence" value="ECO:0007669"/>
    <property type="project" value="UniProtKB-SubCell"/>
</dbReference>
<dbReference type="GO" id="GO:0009055">
    <property type="term" value="F:electron transfer activity"/>
    <property type="evidence" value="ECO:0007669"/>
    <property type="project" value="UniProtKB-UniRule"/>
</dbReference>
<dbReference type="GO" id="GO:0020037">
    <property type="term" value="F:heme binding"/>
    <property type="evidence" value="ECO:0007669"/>
    <property type="project" value="InterPro"/>
</dbReference>
<dbReference type="GO" id="GO:0005506">
    <property type="term" value="F:iron ion binding"/>
    <property type="evidence" value="ECO:0007669"/>
    <property type="project" value="InterPro"/>
</dbReference>
<dbReference type="GO" id="GO:0015979">
    <property type="term" value="P:photosynthesis"/>
    <property type="evidence" value="ECO:0007669"/>
    <property type="project" value="UniProtKB-UniRule"/>
</dbReference>
<dbReference type="FunFam" id="1.20.5.700:FF:000001">
    <property type="entry name" value="Cytochrome f"/>
    <property type="match status" value="1"/>
</dbReference>
<dbReference type="FunFam" id="2.40.50.100:FF:000007">
    <property type="entry name" value="Cytochrome f"/>
    <property type="match status" value="1"/>
</dbReference>
<dbReference type="FunFam" id="2.60.40.830:FF:000001">
    <property type="entry name" value="Cytochrome f"/>
    <property type="match status" value="1"/>
</dbReference>
<dbReference type="Gene3D" id="2.40.50.100">
    <property type="match status" value="1"/>
</dbReference>
<dbReference type="Gene3D" id="2.60.40.830">
    <property type="entry name" value="Cytochrome f large domain"/>
    <property type="match status" value="1"/>
</dbReference>
<dbReference type="Gene3D" id="1.20.5.700">
    <property type="entry name" value="Single helix bin"/>
    <property type="match status" value="1"/>
</dbReference>
<dbReference type="HAMAP" id="MF_00610">
    <property type="entry name" value="Cytb6_f_cytF"/>
    <property type="match status" value="1"/>
</dbReference>
<dbReference type="InterPro" id="IPR024058">
    <property type="entry name" value="Cyt-f_TM"/>
</dbReference>
<dbReference type="InterPro" id="IPR002325">
    <property type="entry name" value="Cyt_f"/>
</dbReference>
<dbReference type="InterPro" id="IPR024094">
    <property type="entry name" value="Cyt_f_lg_dom"/>
</dbReference>
<dbReference type="InterPro" id="IPR036826">
    <property type="entry name" value="Cyt_f_lg_dom_sf"/>
</dbReference>
<dbReference type="InterPro" id="IPR011054">
    <property type="entry name" value="Rudment_hybrid_motif"/>
</dbReference>
<dbReference type="PANTHER" id="PTHR33288">
    <property type="match status" value="1"/>
</dbReference>
<dbReference type="PANTHER" id="PTHR33288:SF10">
    <property type="entry name" value="CYTOCHROME F"/>
    <property type="match status" value="1"/>
</dbReference>
<dbReference type="Pfam" id="PF01333">
    <property type="entry name" value="Apocytochr_F_C"/>
    <property type="match status" value="1"/>
</dbReference>
<dbReference type="Pfam" id="PF16639">
    <property type="entry name" value="Apocytochr_F_N"/>
    <property type="match status" value="1"/>
</dbReference>
<dbReference type="PRINTS" id="PR00610">
    <property type="entry name" value="CYTOCHROMEF"/>
</dbReference>
<dbReference type="SUPFAM" id="SSF103431">
    <property type="entry name" value="Cytochrome f subunit of the cytochrome b6f complex, transmembrane anchor"/>
    <property type="match status" value="1"/>
</dbReference>
<dbReference type="SUPFAM" id="SSF49441">
    <property type="entry name" value="Cytochrome f, large domain"/>
    <property type="match status" value="1"/>
</dbReference>
<dbReference type="SUPFAM" id="SSF51246">
    <property type="entry name" value="Rudiment single hybrid motif"/>
    <property type="match status" value="1"/>
</dbReference>
<dbReference type="PROSITE" id="PS51010">
    <property type="entry name" value="CYTF"/>
    <property type="match status" value="1"/>
</dbReference>
<evidence type="ECO:0000250" key="1"/>
<evidence type="ECO:0000255" key="2"/>
<evidence type="ECO:0000305" key="3"/>
<accession>P04658</accession>
<accession>Q9MTK8</accession>
<comment type="function">
    <text evidence="1">Component of the cytochrome b6-f complex, which mediates electron transfer between photosystem II (PSII) and photosystem I (PSI), cyclic electron flow around PSI, and state transitions.</text>
</comment>
<comment type="cofactor">
    <cofactor evidence="1">
        <name>heme</name>
        <dbReference type="ChEBI" id="CHEBI:30413"/>
    </cofactor>
    <text evidence="1">Binds 1 heme group covalently.</text>
</comment>
<comment type="subunit">
    <text evidence="1">The 4 large subunits of the cytochrome b6-f complex are cytochrome b6, subunit IV (17 kDa polypeptide, petD), cytochrome f and the Rieske protein, while the 4 small subunits are PetG, PetL, PetM and PetN. The complex functions as a dimer (By similarity).</text>
</comment>
<comment type="subcellular location">
    <subcellularLocation>
        <location evidence="1">Plastid</location>
        <location evidence="1">Chloroplast thylakoid membrane</location>
        <topology evidence="1">Single-pass membrane protein</topology>
    </subcellularLocation>
</comment>
<comment type="similarity">
    <text evidence="3">Belongs to the cytochrome f family.</text>
</comment>
<name>CYF_OENEH</name>
<sequence>MKNTFSWIKKEITRSISLSLMIYIITRTSISNAYPIFAQQGYENPREATGRIVCANCHLANKPVDIEVPQAVLPDTVFEAVVRIPYDRQVKQVLANGKKGGLNVGAVLILPEGFELAPPARISPEMKERIGNPSFQSYRPTKKNILVIGPVPGQKYSEITFPILSPDPATNKDVHFLKYPIYVGGNRGRGQIYPDGSKSNNTVYNATAAGIVSKIIRKEKGGYEITITDASDGRQVVDIIPSGPELLVSEGESIKLDQPLTSNPNVGGFGQGDAEVVLQDPLRVQGLLFFLASVILAQIFLVLKKKQFEKVQLSEMNF</sequence>